<comment type="function">
    <text evidence="1">Acts as a regulator of autophagy in response to S.aureus infection by promoting activation of LC3 (MAP1LC3A, MAP1LC3B or MAP1LC3C). Acts by interacting with ATG16L1, leading to promote a functional complex between LC3 and ATG16L1 and promoting LC3 lipidation and subsequent activation of autophagy. Modulates the O-glycosylation and complex N-glycosylation steps occurring during the Golgi maturation of several proteins such as APP, BACE1, SEAP or PRNP. Inhibits APP transport to the cell surface and further shedding.</text>
</comment>
<comment type="subunit">
    <text evidence="1">Interacts with ATG16L1 (via WD repeats).</text>
</comment>
<comment type="subcellular location">
    <subcellularLocation>
        <location evidence="1">Late endosome membrane</location>
        <topology evidence="2">Single-pass type I membrane protein</topology>
    </subcellularLocation>
    <subcellularLocation>
        <location evidence="1">Lysosome membrane</location>
        <topology evidence="2">Single-pass type I membrane protein</topology>
    </subcellularLocation>
    <subcellularLocation>
        <location evidence="1">Cell membrane</location>
        <topology evidence="2">Single-pass type I membrane protein</topology>
    </subcellularLocation>
    <subcellularLocation>
        <location evidence="1">Golgi apparatus membrane</location>
        <topology evidence="2">Single-pass type I membrane protein</topology>
    </subcellularLocation>
    <text evidence="1">Mainly localizes to late endosomes/lysosomes. Probably first exported to the cell surface and then actively endocytosed to transiently localize in early endosomes on its way to the late endosomal/lysosomal compartment where it becomes quickly degraded.</text>
</comment>
<comment type="domain">
    <text evidence="1">The ATG16L1-binding motif mediates interaction with ATG16L1 and promotes autophagy.</text>
</comment>
<comment type="PTM">
    <text evidence="1">N-glycosylated.</text>
</comment>
<comment type="similarity">
    <text evidence="3">Belongs to the TMEM59 family.</text>
</comment>
<proteinExistence type="evidence at protein level"/>
<gene>
    <name type="primary">Tmem59</name>
    <name type="synonym">ORF18</name>
    <name type="synonym">Tdcf1</name>
</gene>
<accession>Q9QY73</accession>
<accession>Q3TWB4</accession>
<accession>Q99LY8</accession>
<accession>Q9D1P9</accession>
<protein>
    <recommendedName>
        <fullName>Transmembrane protein 59</fullName>
    </recommendedName>
    <alternativeName>
        <fullName>Thymic dendritic cell-derived factor 1</fullName>
    </alternativeName>
</protein>
<organism>
    <name type="scientific">Mus musculus</name>
    <name type="common">Mouse</name>
    <dbReference type="NCBI Taxonomy" id="10090"/>
    <lineage>
        <taxon>Eukaryota</taxon>
        <taxon>Metazoa</taxon>
        <taxon>Chordata</taxon>
        <taxon>Craniata</taxon>
        <taxon>Vertebrata</taxon>
        <taxon>Euteleostomi</taxon>
        <taxon>Mammalia</taxon>
        <taxon>Eutheria</taxon>
        <taxon>Euarchontoglires</taxon>
        <taxon>Glires</taxon>
        <taxon>Rodentia</taxon>
        <taxon>Myomorpha</taxon>
        <taxon>Muroidea</taxon>
        <taxon>Muridae</taxon>
        <taxon>Murinae</taxon>
        <taxon>Mus</taxon>
        <taxon>Mus</taxon>
    </lineage>
</organism>
<evidence type="ECO:0000250" key="1">
    <source>
        <dbReference type="UniProtKB" id="Q9BXS4"/>
    </source>
</evidence>
<evidence type="ECO:0000255" key="2"/>
<evidence type="ECO:0000305" key="3"/>
<evidence type="ECO:0007744" key="4">
    <source>
    </source>
</evidence>
<name>TMM59_MOUSE</name>
<sequence length="323" mass="36314">MAAPKGKLWVQAQLGLPPLLLLTMALAGGSGTAAAEAFDSVLGDTASCHRACQLTYPLHTYPKEEELYACQRGCRLFSICQFVDDGLDLNRTKLECESACTEAYSQPDEQYACHLGCQDQLPFAELRQEQLMSLMPRMHLLFPLTLVRSFWSDMMDSAQSFITSSWTFYLQADDGKIVIFQSKPEIQYAPQLEQEPTNLRESSLSKMSYLQMRNSQAHRNYLEEEESDGFLRCLSLNSGWILTTTLVLSVMVLLWICCAAVATAVEQYVPPEKLSIYGDLEFMNEQKLSRYPAPSLVIVRSQTEEHEEAGPLPTKVNLAHSEI</sequence>
<feature type="signal peptide" evidence="2">
    <location>
        <begin position="1"/>
        <end position="35"/>
    </location>
</feature>
<feature type="chain" id="PRO_0000003004" description="Transmembrane protein 59">
    <location>
        <begin position="36"/>
        <end position="323"/>
    </location>
</feature>
<feature type="topological domain" description="Extracellular" evidence="2">
    <location>
        <begin position="36"/>
        <end position="238"/>
    </location>
</feature>
<feature type="transmembrane region" description="Helical" evidence="2">
    <location>
        <begin position="239"/>
        <end position="259"/>
    </location>
</feature>
<feature type="topological domain" description="Cytoplasmic" evidence="2">
    <location>
        <begin position="260"/>
        <end position="323"/>
    </location>
</feature>
<feature type="short sequence motif" description="ATG16L1-binding motif" evidence="1">
    <location>
        <begin position="263"/>
        <end position="281"/>
    </location>
</feature>
<feature type="modified residue" description="Phosphothreonine" evidence="4">
    <location>
        <position position="303"/>
    </location>
</feature>
<feature type="glycosylation site" description="N-linked (GlcNAc...) asparagine" evidence="2">
    <location>
        <position position="90"/>
    </location>
</feature>
<feature type="sequence conflict" description="In Ref. 1; AAF20283." evidence="3" ref="1">
    <original>C</original>
    <variation>V</variation>
    <location>
        <position position="48"/>
    </location>
</feature>
<feature type="sequence conflict" description="In Ref. 1; AAF20283." evidence="3" ref="1">
    <original>A</original>
    <variation>T</variation>
    <location>
        <position position="103"/>
    </location>
</feature>
<feature type="sequence conflict" description="In Ref. 1; AAF20283." evidence="3" ref="1">
    <original>L</original>
    <variation>W</variation>
    <location>
        <position position="121"/>
    </location>
</feature>
<feature type="sequence conflict" description="In Ref. 1; AAF20283." evidence="3" ref="1">
    <original>H</original>
    <variation>Q</variation>
    <location>
        <position position="139"/>
    </location>
</feature>
<feature type="sequence conflict" description="In Ref. 1; AAF20283." evidence="3" ref="1">
    <original>YL</original>
    <variation>DR</variation>
    <location>
        <begin position="221"/>
        <end position="222"/>
    </location>
</feature>
<feature type="sequence conflict" description="In Ref. 3; AAH45145." evidence="3" ref="3">
    <original>L</original>
    <variation>F</variation>
    <location>
        <position position="248"/>
    </location>
</feature>
<feature type="sequence conflict" description="In Ref. 1; AAF20283." evidence="3" ref="1">
    <original>A</original>
    <variation>G</variation>
    <location>
        <position position="264"/>
    </location>
</feature>
<feature type="sequence conflict" description="In Ref. 1; AAF20283." evidence="3" ref="1">
    <original>YGDLEFMNEQKLSRYPAPSLVIVR</original>
    <variation>IGHFQFINQQNLTTYPPPPLLIVK</variation>
    <location>
        <begin position="277"/>
        <end position="300"/>
    </location>
</feature>
<dbReference type="EMBL" id="AF116911">
    <property type="protein sequence ID" value="AAF20283.1"/>
    <property type="molecule type" value="mRNA"/>
</dbReference>
<dbReference type="EMBL" id="AK003252">
    <property type="protein sequence ID" value="BAB22668.2"/>
    <property type="molecule type" value="mRNA"/>
</dbReference>
<dbReference type="EMBL" id="AK050162">
    <property type="protein sequence ID" value="BAC34103.1"/>
    <property type="molecule type" value="mRNA"/>
</dbReference>
<dbReference type="EMBL" id="AK145644">
    <property type="protein sequence ID" value="BAE26561.1"/>
    <property type="molecule type" value="mRNA"/>
</dbReference>
<dbReference type="EMBL" id="AK159761">
    <property type="protein sequence ID" value="BAE35352.1"/>
    <property type="molecule type" value="mRNA"/>
</dbReference>
<dbReference type="EMBL" id="AK166772">
    <property type="protein sequence ID" value="BAE39008.1"/>
    <property type="molecule type" value="mRNA"/>
</dbReference>
<dbReference type="EMBL" id="AK167058">
    <property type="protein sequence ID" value="BAE39221.1"/>
    <property type="molecule type" value="mRNA"/>
</dbReference>
<dbReference type="EMBL" id="BC002164">
    <property type="protein sequence ID" value="AAH02164.1"/>
    <property type="molecule type" value="mRNA"/>
</dbReference>
<dbReference type="EMBL" id="BC014732">
    <property type="protein sequence ID" value="AAH14732.1"/>
    <property type="molecule type" value="mRNA"/>
</dbReference>
<dbReference type="EMBL" id="BC018379">
    <property type="protein sequence ID" value="AAH18379.1"/>
    <property type="molecule type" value="mRNA"/>
</dbReference>
<dbReference type="EMBL" id="BC045145">
    <property type="protein sequence ID" value="AAH45145.1"/>
    <property type="molecule type" value="mRNA"/>
</dbReference>
<dbReference type="EMBL" id="BC058273">
    <property type="protein sequence ID" value="AAH58273.1"/>
    <property type="molecule type" value="mRNA"/>
</dbReference>
<dbReference type="CCDS" id="CCDS18432.1"/>
<dbReference type="RefSeq" id="NP_083841.4">
    <property type="nucleotide sequence ID" value="NM_029565.3"/>
</dbReference>
<dbReference type="FunCoup" id="Q9QY73">
    <property type="interactions" value="1358"/>
</dbReference>
<dbReference type="STRING" id="10090.ENSMUSP00000030361"/>
<dbReference type="GlyCosmos" id="Q9QY73">
    <property type="glycosylation" value="1 site, No reported glycans"/>
</dbReference>
<dbReference type="GlyGen" id="Q9QY73">
    <property type="glycosylation" value="1 site, 1 N-linked glycan (1 site)"/>
</dbReference>
<dbReference type="iPTMnet" id="Q9QY73"/>
<dbReference type="PhosphoSitePlus" id="Q9QY73"/>
<dbReference type="SwissPalm" id="Q9QY73"/>
<dbReference type="PaxDb" id="10090-ENSMUSP00000030361"/>
<dbReference type="PeptideAtlas" id="Q9QY73"/>
<dbReference type="ProteomicsDB" id="259430"/>
<dbReference type="Pumba" id="Q9QY73"/>
<dbReference type="Antibodypedia" id="46893">
    <property type="antibodies" value="96 antibodies from 31 providers"/>
</dbReference>
<dbReference type="DNASU" id="56374"/>
<dbReference type="Ensembl" id="ENSMUST00000030361.11">
    <property type="protein sequence ID" value="ENSMUSP00000030361.5"/>
    <property type="gene ID" value="ENSMUSG00000028618.12"/>
</dbReference>
<dbReference type="GeneID" id="56374"/>
<dbReference type="KEGG" id="mmu:56374"/>
<dbReference type="UCSC" id="uc008tzj.2">
    <property type="organism name" value="mouse"/>
</dbReference>
<dbReference type="AGR" id="MGI:1929278"/>
<dbReference type="CTD" id="9528"/>
<dbReference type="MGI" id="MGI:1929278">
    <property type="gene designation" value="Tmem59"/>
</dbReference>
<dbReference type="VEuPathDB" id="HostDB:ENSMUSG00000028618"/>
<dbReference type="eggNOG" id="ENOG502QUIS">
    <property type="taxonomic scope" value="Eukaryota"/>
</dbReference>
<dbReference type="GeneTree" id="ENSGT00390000008279"/>
<dbReference type="HOGENOM" id="CLU_059747_1_0_1"/>
<dbReference type="InParanoid" id="Q9QY73"/>
<dbReference type="OMA" id="MGCHNQL"/>
<dbReference type="OrthoDB" id="6371519at2759"/>
<dbReference type="PhylomeDB" id="Q9QY73"/>
<dbReference type="TreeFam" id="TF331226"/>
<dbReference type="Reactome" id="R-MMU-9013407">
    <property type="pathway name" value="RHOH GTPase cycle"/>
</dbReference>
<dbReference type="Reactome" id="R-MMU-9696273">
    <property type="pathway name" value="RND1 GTPase cycle"/>
</dbReference>
<dbReference type="BioGRID-ORCS" id="56374">
    <property type="hits" value="1 hit in 81 CRISPR screens"/>
</dbReference>
<dbReference type="ChiTaRS" id="Tmem59">
    <property type="organism name" value="mouse"/>
</dbReference>
<dbReference type="PRO" id="PR:Q9QY73"/>
<dbReference type="Proteomes" id="UP000000589">
    <property type="component" value="Chromosome 4"/>
</dbReference>
<dbReference type="RNAct" id="Q9QY73">
    <property type="molecule type" value="protein"/>
</dbReference>
<dbReference type="Bgee" id="ENSMUSG00000028618">
    <property type="expression patterns" value="Expressed in cortex of kidney and 155 other cell types or tissues"/>
</dbReference>
<dbReference type="ExpressionAtlas" id="Q9QY73">
    <property type="expression patterns" value="baseline and differential"/>
</dbReference>
<dbReference type="GO" id="GO:0000137">
    <property type="term" value="C:Golgi cis cisterna"/>
    <property type="evidence" value="ECO:0007669"/>
    <property type="project" value="Ensembl"/>
</dbReference>
<dbReference type="GO" id="GO:0005797">
    <property type="term" value="C:Golgi medial cisterna"/>
    <property type="evidence" value="ECO:0007669"/>
    <property type="project" value="Ensembl"/>
</dbReference>
<dbReference type="GO" id="GO:0000139">
    <property type="term" value="C:Golgi membrane"/>
    <property type="evidence" value="ECO:0007669"/>
    <property type="project" value="UniProtKB-SubCell"/>
</dbReference>
<dbReference type="GO" id="GO:0000138">
    <property type="term" value="C:Golgi trans cisterna"/>
    <property type="evidence" value="ECO:0007669"/>
    <property type="project" value="Ensembl"/>
</dbReference>
<dbReference type="GO" id="GO:0005770">
    <property type="term" value="C:late endosome"/>
    <property type="evidence" value="ECO:0000250"/>
    <property type="project" value="UniProtKB"/>
</dbReference>
<dbReference type="GO" id="GO:0031902">
    <property type="term" value="C:late endosome membrane"/>
    <property type="evidence" value="ECO:0007669"/>
    <property type="project" value="UniProtKB-SubCell"/>
</dbReference>
<dbReference type="GO" id="GO:0005765">
    <property type="term" value="C:lysosomal membrane"/>
    <property type="evidence" value="ECO:0007669"/>
    <property type="project" value="UniProtKB-SubCell"/>
</dbReference>
<dbReference type="GO" id="GO:0005764">
    <property type="term" value="C:lysosome"/>
    <property type="evidence" value="ECO:0000250"/>
    <property type="project" value="UniProtKB"/>
</dbReference>
<dbReference type="GO" id="GO:0005886">
    <property type="term" value="C:plasma membrane"/>
    <property type="evidence" value="ECO:0007669"/>
    <property type="project" value="UniProtKB-SubCell"/>
</dbReference>
<dbReference type="GO" id="GO:0004175">
    <property type="term" value="F:endopeptidase activity"/>
    <property type="evidence" value="ECO:0000314"/>
    <property type="project" value="MGI"/>
</dbReference>
<dbReference type="GO" id="GO:0006914">
    <property type="term" value="P:autophagy"/>
    <property type="evidence" value="ECO:0007669"/>
    <property type="project" value="UniProtKB-KW"/>
</dbReference>
<dbReference type="GO" id="GO:1903077">
    <property type="term" value="P:negative regulation of protein localization to plasma membrane"/>
    <property type="evidence" value="ECO:0007669"/>
    <property type="project" value="Ensembl"/>
</dbReference>
<dbReference type="GO" id="GO:0010508">
    <property type="term" value="P:positive regulation of autophagy"/>
    <property type="evidence" value="ECO:0000250"/>
    <property type="project" value="UniProtKB"/>
</dbReference>
<dbReference type="GO" id="GO:0006486">
    <property type="term" value="P:protein glycosylation"/>
    <property type="evidence" value="ECO:0007669"/>
    <property type="project" value="Ensembl"/>
</dbReference>
<dbReference type="InterPro" id="IPR022065">
    <property type="entry name" value="Uncharacterised_TMEM59"/>
</dbReference>
<dbReference type="PANTHER" id="PTHR28652:SF3">
    <property type="entry name" value="TRANSMEMBRANE PROTEIN 59"/>
    <property type="match status" value="1"/>
</dbReference>
<dbReference type="PANTHER" id="PTHR28652">
    <property type="entry name" value="TRANSMEMBRANE PROTEIN 59-LIKE PROTEIN"/>
    <property type="match status" value="1"/>
</dbReference>
<dbReference type="Pfam" id="PF12280">
    <property type="entry name" value="BSMAP"/>
    <property type="match status" value="1"/>
</dbReference>
<keyword id="KW-0072">Autophagy</keyword>
<keyword id="KW-1003">Cell membrane</keyword>
<keyword id="KW-0903">Direct protein sequencing</keyword>
<keyword id="KW-0967">Endosome</keyword>
<keyword id="KW-0325">Glycoprotein</keyword>
<keyword id="KW-0333">Golgi apparatus</keyword>
<keyword id="KW-0458">Lysosome</keyword>
<keyword id="KW-0472">Membrane</keyword>
<keyword id="KW-0597">Phosphoprotein</keyword>
<keyword id="KW-1185">Reference proteome</keyword>
<keyword id="KW-0732">Signal</keyword>
<keyword id="KW-0812">Transmembrane</keyword>
<keyword id="KW-1133">Transmembrane helix</keyword>
<reference key="1">
    <citation type="submission" date="1998-12" db="EMBL/GenBank/DDBJ databases">
        <title>Isolation and molecular cloning of gene encoding a novel dendritic cell-derived factor.</title>
        <authorList>
            <person name="Jin C.G."/>
            <person name="Chen W.F."/>
        </authorList>
    </citation>
    <scope>NUCLEOTIDE SEQUENCE [MRNA]</scope>
    <source>
        <strain>BALB/cJ</strain>
        <tissue>Thymus</tissue>
    </source>
</reference>
<reference key="2">
    <citation type="journal article" date="2005" name="Science">
        <title>The transcriptional landscape of the mammalian genome.</title>
        <authorList>
            <person name="Carninci P."/>
            <person name="Kasukawa T."/>
            <person name="Katayama S."/>
            <person name="Gough J."/>
            <person name="Frith M.C."/>
            <person name="Maeda N."/>
            <person name="Oyama R."/>
            <person name="Ravasi T."/>
            <person name="Lenhard B."/>
            <person name="Wells C."/>
            <person name="Kodzius R."/>
            <person name="Shimokawa K."/>
            <person name="Bajic V.B."/>
            <person name="Brenner S.E."/>
            <person name="Batalov S."/>
            <person name="Forrest A.R."/>
            <person name="Zavolan M."/>
            <person name="Davis M.J."/>
            <person name="Wilming L.G."/>
            <person name="Aidinis V."/>
            <person name="Allen J.E."/>
            <person name="Ambesi-Impiombato A."/>
            <person name="Apweiler R."/>
            <person name="Aturaliya R.N."/>
            <person name="Bailey T.L."/>
            <person name="Bansal M."/>
            <person name="Baxter L."/>
            <person name="Beisel K.W."/>
            <person name="Bersano T."/>
            <person name="Bono H."/>
            <person name="Chalk A.M."/>
            <person name="Chiu K.P."/>
            <person name="Choudhary V."/>
            <person name="Christoffels A."/>
            <person name="Clutterbuck D.R."/>
            <person name="Crowe M.L."/>
            <person name="Dalla E."/>
            <person name="Dalrymple B.P."/>
            <person name="de Bono B."/>
            <person name="Della Gatta G."/>
            <person name="di Bernardo D."/>
            <person name="Down T."/>
            <person name="Engstrom P."/>
            <person name="Fagiolini M."/>
            <person name="Faulkner G."/>
            <person name="Fletcher C.F."/>
            <person name="Fukushima T."/>
            <person name="Furuno M."/>
            <person name="Futaki S."/>
            <person name="Gariboldi M."/>
            <person name="Georgii-Hemming P."/>
            <person name="Gingeras T.R."/>
            <person name="Gojobori T."/>
            <person name="Green R.E."/>
            <person name="Gustincich S."/>
            <person name="Harbers M."/>
            <person name="Hayashi Y."/>
            <person name="Hensch T.K."/>
            <person name="Hirokawa N."/>
            <person name="Hill D."/>
            <person name="Huminiecki L."/>
            <person name="Iacono M."/>
            <person name="Ikeo K."/>
            <person name="Iwama A."/>
            <person name="Ishikawa T."/>
            <person name="Jakt M."/>
            <person name="Kanapin A."/>
            <person name="Katoh M."/>
            <person name="Kawasawa Y."/>
            <person name="Kelso J."/>
            <person name="Kitamura H."/>
            <person name="Kitano H."/>
            <person name="Kollias G."/>
            <person name="Krishnan S.P."/>
            <person name="Kruger A."/>
            <person name="Kummerfeld S.K."/>
            <person name="Kurochkin I.V."/>
            <person name="Lareau L.F."/>
            <person name="Lazarevic D."/>
            <person name="Lipovich L."/>
            <person name="Liu J."/>
            <person name="Liuni S."/>
            <person name="McWilliam S."/>
            <person name="Madan Babu M."/>
            <person name="Madera M."/>
            <person name="Marchionni L."/>
            <person name="Matsuda H."/>
            <person name="Matsuzawa S."/>
            <person name="Miki H."/>
            <person name="Mignone F."/>
            <person name="Miyake S."/>
            <person name="Morris K."/>
            <person name="Mottagui-Tabar S."/>
            <person name="Mulder N."/>
            <person name="Nakano N."/>
            <person name="Nakauchi H."/>
            <person name="Ng P."/>
            <person name="Nilsson R."/>
            <person name="Nishiguchi S."/>
            <person name="Nishikawa S."/>
            <person name="Nori F."/>
            <person name="Ohara O."/>
            <person name="Okazaki Y."/>
            <person name="Orlando V."/>
            <person name="Pang K.C."/>
            <person name="Pavan W.J."/>
            <person name="Pavesi G."/>
            <person name="Pesole G."/>
            <person name="Petrovsky N."/>
            <person name="Piazza S."/>
            <person name="Reed J."/>
            <person name="Reid J.F."/>
            <person name="Ring B.Z."/>
            <person name="Ringwald M."/>
            <person name="Rost B."/>
            <person name="Ruan Y."/>
            <person name="Salzberg S.L."/>
            <person name="Sandelin A."/>
            <person name="Schneider C."/>
            <person name="Schoenbach C."/>
            <person name="Sekiguchi K."/>
            <person name="Semple C.A."/>
            <person name="Seno S."/>
            <person name="Sessa L."/>
            <person name="Sheng Y."/>
            <person name="Shibata Y."/>
            <person name="Shimada H."/>
            <person name="Shimada K."/>
            <person name="Silva D."/>
            <person name="Sinclair B."/>
            <person name="Sperling S."/>
            <person name="Stupka E."/>
            <person name="Sugiura K."/>
            <person name="Sultana R."/>
            <person name="Takenaka Y."/>
            <person name="Taki K."/>
            <person name="Tammoja K."/>
            <person name="Tan S.L."/>
            <person name="Tang S."/>
            <person name="Taylor M.S."/>
            <person name="Tegner J."/>
            <person name="Teichmann S.A."/>
            <person name="Ueda H.R."/>
            <person name="van Nimwegen E."/>
            <person name="Verardo R."/>
            <person name="Wei C.L."/>
            <person name="Yagi K."/>
            <person name="Yamanishi H."/>
            <person name="Zabarovsky E."/>
            <person name="Zhu S."/>
            <person name="Zimmer A."/>
            <person name="Hide W."/>
            <person name="Bult C."/>
            <person name="Grimmond S.M."/>
            <person name="Teasdale R.D."/>
            <person name="Liu E.T."/>
            <person name="Brusic V."/>
            <person name="Quackenbush J."/>
            <person name="Wahlestedt C."/>
            <person name="Mattick J.S."/>
            <person name="Hume D.A."/>
            <person name="Kai C."/>
            <person name="Sasaki D."/>
            <person name="Tomaru Y."/>
            <person name="Fukuda S."/>
            <person name="Kanamori-Katayama M."/>
            <person name="Suzuki M."/>
            <person name="Aoki J."/>
            <person name="Arakawa T."/>
            <person name="Iida J."/>
            <person name="Imamura K."/>
            <person name="Itoh M."/>
            <person name="Kato T."/>
            <person name="Kawaji H."/>
            <person name="Kawagashira N."/>
            <person name="Kawashima T."/>
            <person name="Kojima M."/>
            <person name="Kondo S."/>
            <person name="Konno H."/>
            <person name="Nakano K."/>
            <person name="Ninomiya N."/>
            <person name="Nishio T."/>
            <person name="Okada M."/>
            <person name="Plessy C."/>
            <person name="Shibata K."/>
            <person name="Shiraki T."/>
            <person name="Suzuki S."/>
            <person name="Tagami M."/>
            <person name="Waki K."/>
            <person name="Watahiki A."/>
            <person name="Okamura-Oho Y."/>
            <person name="Suzuki H."/>
            <person name="Kawai J."/>
            <person name="Hayashizaki Y."/>
        </authorList>
    </citation>
    <scope>NUCLEOTIDE SEQUENCE [LARGE SCALE MRNA]</scope>
    <source>
        <strain>C57BL/6J</strain>
        <tissue>Embryo</tissue>
        <tissue>Liver</tissue>
    </source>
</reference>
<reference key="3">
    <citation type="journal article" date="2004" name="Genome Res.">
        <title>The status, quality, and expansion of the NIH full-length cDNA project: the Mammalian Gene Collection (MGC).</title>
        <authorList>
            <consortium name="The MGC Project Team"/>
        </authorList>
    </citation>
    <scope>NUCLEOTIDE SEQUENCE [LARGE SCALE MRNA]</scope>
    <source>
        <strain>C57BL/6J</strain>
        <strain>FVB/N</strain>
        <tissue>Colon</tissue>
        <tissue>Eye</tissue>
        <tissue>Kidney</tissue>
        <tissue>Mammary gland</tissue>
    </source>
</reference>
<reference key="4">
    <citation type="submission" date="2009-01" db="UniProtKB">
        <authorList>
            <person name="Lubec G."/>
            <person name="Sunyer B."/>
            <person name="Chen W.-Q."/>
        </authorList>
    </citation>
    <scope>PROTEIN SEQUENCE OF 316-323</scope>
    <scope>IDENTIFICATION BY MASS SPECTROMETRY</scope>
    <source>
        <strain>OF1</strain>
        <tissue>Hippocampus</tissue>
    </source>
</reference>
<reference key="5">
    <citation type="journal article" date="2010" name="Cell">
        <title>A tissue-specific atlas of mouse protein phosphorylation and expression.</title>
        <authorList>
            <person name="Huttlin E.L."/>
            <person name="Jedrychowski M.P."/>
            <person name="Elias J.E."/>
            <person name="Goswami T."/>
            <person name="Rad R."/>
            <person name="Beausoleil S.A."/>
            <person name="Villen J."/>
            <person name="Haas W."/>
            <person name="Sowa M.E."/>
            <person name="Gygi S.P."/>
        </authorList>
    </citation>
    <scope>PHOSPHORYLATION [LARGE SCALE ANALYSIS] AT THR-303</scope>
    <scope>IDENTIFICATION BY MASS SPECTROMETRY [LARGE SCALE ANALYSIS]</scope>
    <source>
        <tissue>Brown adipose tissue</tissue>
        <tissue>Heart</tissue>
        <tissue>Lung</tissue>
    </source>
</reference>